<proteinExistence type="evidence at transcript level"/>
<protein>
    <recommendedName>
        <fullName>Neurotoxin Cex11</fullName>
    </recommendedName>
</protein>
<keyword id="KW-0027">Amidation</keyword>
<keyword id="KW-1015">Disulfide bond</keyword>
<keyword id="KW-0872">Ion channel impairing toxin</keyword>
<keyword id="KW-0528">Neurotoxin</keyword>
<keyword id="KW-0964">Secreted</keyword>
<keyword id="KW-0800">Toxin</keyword>
<keyword id="KW-0738">Voltage-gated sodium channel impairing toxin</keyword>
<feature type="chain" id="PRO_0000254082" description="Neurotoxin Cex11">
    <location>
        <begin position="1"/>
        <end position="63"/>
    </location>
</feature>
<feature type="propeptide" id="PRO_0000254083">
    <location>
        <begin position="64"/>
        <end position="66"/>
    </location>
</feature>
<feature type="domain" description="LCN-type CS-alpha/beta" evidence="3">
    <location>
        <begin position="1"/>
        <end position="64"/>
    </location>
</feature>
<feature type="modified residue" description="Cysteine amide" evidence="2">
    <location>
        <position position="63"/>
    </location>
</feature>
<feature type="disulfide bond" evidence="3">
    <location>
        <begin position="12"/>
        <end position="63"/>
    </location>
</feature>
<feature type="disulfide bond" evidence="3">
    <location>
        <begin position="16"/>
        <end position="39"/>
    </location>
</feature>
<feature type="disulfide bond" evidence="3">
    <location>
        <begin position="25"/>
        <end position="44"/>
    </location>
</feature>
<feature type="disulfide bond" evidence="3">
    <location>
        <begin position="29"/>
        <end position="46"/>
    </location>
</feature>
<reference key="1">
    <citation type="journal article" date="2004" name="Biochimie">
        <title>Biochemical, genetic and physiological characterization of venom components from two species of scorpions: Centruroides exilicauda Wood and Centruroides sculpturatus Ewing.</title>
        <authorList>
            <person name="Valdez-Cruz N.A."/>
            <person name="Davila S."/>
            <person name="Licea A."/>
            <person name="Corona M."/>
            <person name="Zamudio F.Z."/>
            <person name="Garcia-Valdes J."/>
            <person name="Boyer L."/>
            <person name="Possani L.D."/>
        </authorList>
    </citation>
    <scope>NUCLEOTIDE SEQUENCE [MRNA]</scope>
    <source>
        <tissue>Venom gland</tissue>
    </source>
</reference>
<comment type="function">
    <text evidence="1">Beta toxins bind voltage-independently at site-4 of sodium channels (Nav) and shift the voltage of activation toward more negative potentials thereby affecting sodium channel activation and promoting spontaneous and repetitive firing.</text>
</comment>
<comment type="subcellular location">
    <subcellularLocation>
        <location evidence="1">Secreted</location>
    </subcellularLocation>
</comment>
<comment type="tissue specificity">
    <text>Expressed by the venom gland.</text>
</comment>
<comment type="domain">
    <text evidence="4">Has the structural arrangement of an alpha-helix connected to antiparallel beta-sheets by disulfide bonds (CS-alpha/beta).</text>
</comment>
<comment type="similarity">
    <text evidence="4">Belongs to the long (4 C-C) scorpion toxin superfamily. Sodium channel inhibitor family. Beta subfamily.</text>
</comment>
<name>SCX11_CENEX</name>
<dbReference type="EMBL" id="AY649869">
    <property type="protein sequence ID" value="AAT98002.1"/>
    <property type="molecule type" value="mRNA"/>
</dbReference>
<dbReference type="SMR" id="Q68PG4"/>
<dbReference type="GO" id="GO:0005576">
    <property type="term" value="C:extracellular region"/>
    <property type="evidence" value="ECO:0007669"/>
    <property type="project" value="UniProtKB-SubCell"/>
</dbReference>
<dbReference type="GO" id="GO:0019871">
    <property type="term" value="F:sodium channel inhibitor activity"/>
    <property type="evidence" value="ECO:0007669"/>
    <property type="project" value="InterPro"/>
</dbReference>
<dbReference type="GO" id="GO:0090729">
    <property type="term" value="F:toxin activity"/>
    <property type="evidence" value="ECO:0007669"/>
    <property type="project" value="UniProtKB-KW"/>
</dbReference>
<dbReference type="GO" id="GO:0006952">
    <property type="term" value="P:defense response"/>
    <property type="evidence" value="ECO:0007669"/>
    <property type="project" value="InterPro"/>
</dbReference>
<dbReference type="CDD" id="cd23106">
    <property type="entry name" value="neurotoxins_LC_scorpion"/>
    <property type="match status" value="1"/>
</dbReference>
<dbReference type="Gene3D" id="3.30.30.10">
    <property type="entry name" value="Knottin, scorpion toxin-like"/>
    <property type="match status" value="1"/>
</dbReference>
<dbReference type="InterPro" id="IPR044062">
    <property type="entry name" value="LCN-type_CS_alpha_beta_dom"/>
</dbReference>
<dbReference type="InterPro" id="IPR003614">
    <property type="entry name" value="Scorpion_toxin-like"/>
</dbReference>
<dbReference type="InterPro" id="IPR036574">
    <property type="entry name" value="Scorpion_toxin-like_sf"/>
</dbReference>
<dbReference type="InterPro" id="IPR018218">
    <property type="entry name" value="Scorpion_toxinL"/>
</dbReference>
<dbReference type="InterPro" id="IPR002061">
    <property type="entry name" value="Scorpion_toxinL/defensin"/>
</dbReference>
<dbReference type="Pfam" id="PF00537">
    <property type="entry name" value="Toxin_3"/>
    <property type="match status" value="1"/>
</dbReference>
<dbReference type="PRINTS" id="PR00285">
    <property type="entry name" value="SCORPNTOXIN"/>
</dbReference>
<dbReference type="SMART" id="SM00505">
    <property type="entry name" value="Knot1"/>
    <property type="match status" value="1"/>
</dbReference>
<dbReference type="SUPFAM" id="SSF57095">
    <property type="entry name" value="Scorpion toxin-like"/>
    <property type="match status" value="1"/>
</dbReference>
<dbReference type="PROSITE" id="PS51863">
    <property type="entry name" value="LCN_CSAB"/>
    <property type="match status" value="1"/>
</dbReference>
<sequence>KEGYPVNIYTGCKYSCWLLGENEYCIAECKEIGAGYGYCHGFGCWCEQFPENKPSYPYPEKSCGRK</sequence>
<evidence type="ECO:0000250" key="1"/>
<evidence type="ECO:0000255" key="2"/>
<evidence type="ECO:0000255" key="3">
    <source>
        <dbReference type="PROSITE-ProRule" id="PRU01210"/>
    </source>
</evidence>
<evidence type="ECO:0000305" key="4"/>
<organism>
    <name type="scientific">Centruroides exilicauda</name>
    <name type="common">Bark scorpion</name>
    <name type="synonym">Buthus exilicauda</name>
    <dbReference type="NCBI Taxonomy" id="6879"/>
    <lineage>
        <taxon>Eukaryota</taxon>
        <taxon>Metazoa</taxon>
        <taxon>Ecdysozoa</taxon>
        <taxon>Arthropoda</taxon>
        <taxon>Chelicerata</taxon>
        <taxon>Arachnida</taxon>
        <taxon>Scorpiones</taxon>
        <taxon>Buthida</taxon>
        <taxon>Buthoidea</taxon>
        <taxon>Buthidae</taxon>
        <taxon>Centruroides</taxon>
    </lineage>
</organism>
<accession>Q68PG4</accession>